<protein>
    <recommendedName>
        <fullName evidence="1">Large ribosomal subunit protein uL3</fullName>
    </recommendedName>
    <alternativeName>
        <fullName evidence="2">50S ribosomal protein L3</fullName>
    </alternativeName>
</protein>
<keyword id="KW-1185">Reference proteome</keyword>
<keyword id="KW-0687">Ribonucleoprotein</keyword>
<keyword id="KW-0689">Ribosomal protein</keyword>
<keyword id="KW-0694">RNA-binding</keyword>
<keyword id="KW-0699">rRNA-binding</keyword>
<accession>Q2LQA1</accession>
<evidence type="ECO:0000255" key="1">
    <source>
        <dbReference type="HAMAP-Rule" id="MF_01325"/>
    </source>
</evidence>
<evidence type="ECO:0000305" key="2"/>
<feature type="chain" id="PRO_0000241426" description="Large ribosomal subunit protein uL3">
    <location>
        <begin position="1"/>
        <end position="218"/>
    </location>
</feature>
<proteinExistence type="inferred from homology"/>
<dbReference type="EMBL" id="CP000252">
    <property type="protein sequence ID" value="ABC76180.1"/>
    <property type="molecule type" value="Genomic_DNA"/>
</dbReference>
<dbReference type="SMR" id="Q2LQA1"/>
<dbReference type="FunCoup" id="Q2LQA1">
    <property type="interactions" value="601"/>
</dbReference>
<dbReference type="STRING" id="56780.SYN_00985"/>
<dbReference type="KEGG" id="sat:SYN_00985"/>
<dbReference type="eggNOG" id="COG0087">
    <property type="taxonomic scope" value="Bacteria"/>
</dbReference>
<dbReference type="HOGENOM" id="CLU_044142_4_1_7"/>
<dbReference type="InParanoid" id="Q2LQA1"/>
<dbReference type="Proteomes" id="UP000001933">
    <property type="component" value="Chromosome"/>
</dbReference>
<dbReference type="GO" id="GO:0022625">
    <property type="term" value="C:cytosolic large ribosomal subunit"/>
    <property type="evidence" value="ECO:0007669"/>
    <property type="project" value="TreeGrafter"/>
</dbReference>
<dbReference type="GO" id="GO:0019843">
    <property type="term" value="F:rRNA binding"/>
    <property type="evidence" value="ECO:0007669"/>
    <property type="project" value="UniProtKB-UniRule"/>
</dbReference>
<dbReference type="GO" id="GO:0003735">
    <property type="term" value="F:structural constituent of ribosome"/>
    <property type="evidence" value="ECO:0007669"/>
    <property type="project" value="InterPro"/>
</dbReference>
<dbReference type="GO" id="GO:0006412">
    <property type="term" value="P:translation"/>
    <property type="evidence" value="ECO:0007669"/>
    <property type="project" value="UniProtKB-UniRule"/>
</dbReference>
<dbReference type="FunFam" id="2.40.30.10:FF:000004">
    <property type="entry name" value="50S ribosomal protein L3"/>
    <property type="match status" value="1"/>
</dbReference>
<dbReference type="FunFam" id="3.30.160.810:FF:000001">
    <property type="entry name" value="50S ribosomal protein L3"/>
    <property type="match status" value="1"/>
</dbReference>
<dbReference type="Gene3D" id="3.30.160.810">
    <property type="match status" value="1"/>
</dbReference>
<dbReference type="Gene3D" id="2.40.30.10">
    <property type="entry name" value="Translation factors"/>
    <property type="match status" value="1"/>
</dbReference>
<dbReference type="HAMAP" id="MF_01325_B">
    <property type="entry name" value="Ribosomal_uL3_B"/>
    <property type="match status" value="1"/>
</dbReference>
<dbReference type="InterPro" id="IPR000597">
    <property type="entry name" value="Ribosomal_uL3"/>
</dbReference>
<dbReference type="InterPro" id="IPR019927">
    <property type="entry name" value="Ribosomal_uL3_bac/org-type"/>
</dbReference>
<dbReference type="InterPro" id="IPR019926">
    <property type="entry name" value="Ribosomal_uL3_CS"/>
</dbReference>
<dbReference type="InterPro" id="IPR009000">
    <property type="entry name" value="Transl_B-barrel_sf"/>
</dbReference>
<dbReference type="NCBIfam" id="TIGR03625">
    <property type="entry name" value="L3_bact"/>
    <property type="match status" value="1"/>
</dbReference>
<dbReference type="PANTHER" id="PTHR11229">
    <property type="entry name" value="50S RIBOSOMAL PROTEIN L3"/>
    <property type="match status" value="1"/>
</dbReference>
<dbReference type="PANTHER" id="PTHR11229:SF16">
    <property type="entry name" value="LARGE RIBOSOMAL SUBUNIT PROTEIN UL3C"/>
    <property type="match status" value="1"/>
</dbReference>
<dbReference type="Pfam" id="PF00297">
    <property type="entry name" value="Ribosomal_L3"/>
    <property type="match status" value="1"/>
</dbReference>
<dbReference type="SUPFAM" id="SSF50447">
    <property type="entry name" value="Translation proteins"/>
    <property type="match status" value="1"/>
</dbReference>
<dbReference type="PROSITE" id="PS00474">
    <property type="entry name" value="RIBOSOMAL_L3"/>
    <property type="match status" value="1"/>
</dbReference>
<sequence>MNVEDEVDLMKKMIIGRKIGMTQVFAEDGAAIPVTAIEVEPSVITQKKTVEKDGYDAIQLGYGRIKQNKATKPLQGHFAKADKGCFRILKEMRCDQIQEYELGQEITLDIFESGEMVDITGTTKGKGFAGVIKRHGFRGGRSSHGSMFHRAPGSIGASAYPSRVFKGKKLPGQMGNKQKTVKNLMIWSLRPERNLILIRGAVPGARNGYLFIKQSAKA</sequence>
<organism>
    <name type="scientific">Syntrophus aciditrophicus (strain SB)</name>
    <dbReference type="NCBI Taxonomy" id="56780"/>
    <lineage>
        <taxon>Bacteria</taxon>
        <taxon>Pseudomonadati</taxon>
        <taxon>Thermodesulfobacteriota</taxon>
        <taxon>Syntrophia</taxon>
        <taxon>Syntrophales</taxon>
        <taxon>Syntrophaceae</taxon>
        <taxon>Syntrophus</taxon>
    </lineage>
</organism>
<name>RL3_SYNAS</name>
<reference key="1">
    <citation type="journal article" date="2007" name="Proc. Natl. Acad. Sci. U.S.A.">
        <title>The genome of Syntrophus aciditrophicus: life at the thermodynamic limit of microbial growth.</title>
        <authorList>
            <person name="McInerney M.J."/>
            <person name="Rohlin L."/>
            <person name="Mouttaki H."/>
            <person name="Kim U."/>
            <person name="Krupp R.S."/>
            <person name="Rios-Hernandez L."/>
            <person name="Sieber J."/>
            <person name="Struchtemeyer C.G."/>
            <person name="Bhattacharyya A."/>
            <person name="Campbell J.W."/>
            <person name="Gunsalus R.P."/>
        </authorList>
    </citation>
    <scope>NUCLEOTIDE SEQUENCE [LARGE SCALE GENOMIC DNA]</scope>
    <source>
        <strain>SB</strain>
    </source>
</reference>
<comment type="function">
    <text evidence="1">One of the primary rRNA binding proteins, it binds directly near the 3'-end of the 23S rRNA, where it nucleates assembly of the 50S subunit.</text>
</comment>
<comment type="subunit">
    <text evidence="1">Part of the 50S ribosomal subunit. Forms a cluster with proteins L14 and L19.</text>
</comment>
<comment type="similarity">
    <text evidence="1">Belongs to the universal ribosomal protein uL3 family.</text>
</comment>
<gene>
    <name evidence="1" type="primary">rplC</name>
    <name type="ordered locus">SYNAS_03010</name>
    <name type="ORF">SYN_00985</name>
</gene>